<proteinExistence type="inferred from homology"/>
<dbReference type="EC" id="2.6.1.16" evidence="1"/>
<dbReference type="EMBL" id="BA000003">
    <property type="protein sequence ID" value="BAB12753.1"/>
    <property type="status" value="ALT_INIT"/>
    <property type="molecule type" value="Genomic_DNA"/>
</dbReference>
<dbReference type="RefSeq" id="NP_239867.2">
    <property type="nucleotide sequence ID" value="NC_002528.1"/>
</dbReference>
<dbReference type="RefSeq" id="WP_009873987.1">
    <property type="nucleotide sequence ID" value="NC_002528.1"/>
</dbReference>
<dbReference type="SMR" id="P57138"/>
<dbReference type="STRING" id="563178.BUAP5A_026"/>
<dbReference type="EnsemblBacteria" id="BAB12753">
    <property type="protein sequence ID" value="BAB12753"/>
    <property type="gene ID" value="BAB12753"/>
</dbReference>
<dbReference type="KEGG" id="buc:BU026"/>
<dbReference type="PATRIC" id="fig|107806.10.peg.38"/>
<dbReference type="eggNOG" id="COG0449">
    <property type="taxonomic scope" value="Bacteria"/>
</dbReference>
<dbReference type="HOGENOM" id="CLU_012520_5_2_6"/>
<dbReference type="Proteomes" id="UP000001806">
    <property type="component" value="Chromosome"/>
</dbReference>
<dbReference type="GO" id="GO:0005829">
    <property type="term" value="C:cytosol"/>
    <property type="evidence" value="ECO:0007669"/>
    <property type="project" value="TreeGrafter"/>
</dbReference>
<dbReference type="GO" id="GO:0097367">
    <property type="term" value="F:carbohydrate derivative binding"/>
    <property type="evidence" value="ECO:0007669"/>
    <property type="project" value="InterPro"/>
</dbReference>
<dbReference type="GO" id="GO:0004360">
    <property type="term" value="F:glutamine-fructose-6-phosphate transaminase (isomerizing) activity"/>
    <property type="evidence" value="ECO:0007669"/>
    <property type="project" value="UniProtKB-UniRule"/>
</dbReference>
<dbReference type="GO" id="GO:0005975">
    <property type="term" value="P:carbohydrate metabolic process"/>
    <property type="evidence" value="ECO:0007669"/>
    <property type="project" value="UniProtKB-UniRule"/>
</dbReference>
<dbReference type="GO" id="GO:0006002">
    <property type="term" value="P:fructose 6-phosphate metabolic process"/>
    <property type="evidence" value="ECO:0007669"/>
    <property type="project" value="TreeGrafter"/>
</dbReference>
<dbReference type="GO" id="GO:0006487">
    <property type="term" value="P:protein N-linked glycosylation"/>
    <property type="evidence" value="ECO:0007669"/>
    <property type="project" value="TreeGrafter"/>
</dbReference>
<dbReference type="GO" id="GO:0006047">
    <property type="term" value="P:UDP-N-acetylglucosamine metabolic process"/>
    <property type="evidence" value="ECO:0007669"/>
    <property type="project" value="TreeGrafter"/>
</dbReference>
<dbReference type="CDD" id="cd00714">
    <property type="entry name" value="GFAT"/>
    <property type="match status" value="1"/>
</dbReference>
<dbReference type="CDD" id="cd05008">
    <property type="entry name" value="SIS_GlmS_GlmD_1"/>
    <property type="match status" value="1"/>
</dbReference>
<dbReference type="CDD" id="cd05009">
    <property type="entry name" value="SIS_GlmS_GlmD_2"/>
    <property type="match status" value="1"/>
</dbReference>
<dbReference type="FunFam" id="3.40.50.10490:FF:000001">
    <property type="entry name" value="Glutamine--fructose-6-phosphate aminotransferase [isomerizing]"/>
    <property type="match status" value="1"/>
</dbReference>
<dbReference type="FunFam" id="3.60.20.10:FF:000006">
    <property type="entry name" value="Glutamine--fructose-6-phosphate aminotransferase [isomerizing]"/>
    <property type="match status" value="1"/>
</dbReference>
<dbReference type="Gene3D" id="3.40.50.10490">
    <property type="entry name" value="Glucose-6-phosphate isomerase like protein, domain 1"/>
    <property type="match status" value="2"/>
</dbReference>
<dbReference type="Gene3D" id="3.60.20.10">
    <property type="entry name" value="Glutamine Phosphoribosylpyrophosphate, subunit 1, domain 1"/>
    <property type="match status" value="1"/>
</dbReference>
<dbReference type="HAMAP" id="MF_00164">
    <property type="entry name" value="GlmS"/>
    <property type="match status" value="1"/>
</dbReference>
<dbReference type="InterPro" id="IPR017932">
    <property type="entry name" value="GATase_2_dom"/>
</dbReference>
<dbReference type="InterPro" id="IPR005855">
    <property type="entry name" value="GFAT"/>
</dbReference>
<dbReference type="InterPro" id="IPR047084">
    <property type="entry name" value="GFAT_N"/>
</dbReference>
<dbReference type="InterPro" id="IPR035466">
    <property type="entry name" value="GlmS/AgaS_SIS"/>
</dbReference>
<dbReference type="InterPro" id="IPR035490">
    <property type="entry name" value="GlmS/FrlB_SIS"/>
</dbReference>
<dbReference type="InterPro" id="IPR029055">
    <property type="entry name" value="Ntn_hydrolases_N"/>
</dbReference>
<dbReference type="InterPro" id="IPR001347">
    <property type="entry name" value="SIS_dom"/>
</dbReference>
<dbReference type="InterPro" id="IPR046348">
    <property type="entry name" value="SIS_dom_sf"/>
</dbReference>
<dbReference type="NCBIfam" id="TIGR01135">
    <property type="entry name" value="glmS"/>
    <property type="match status" value="1"/>
</dbReference>
<dbReference type="NCBIfam" id="NF001484">
    <property type="entry name" value="PRK00331.1"/>
    <property type="match status" value="1"/>
</dbReference>
<dbReference type="PANTHER" id="PTHR10937">
    <property type="entry name" value="GLUCOSAMINE--FRUCTOSE-6-PHOSPHATE AMINOTRANSFERASE, ISOMERIZING"/>
    <property type="match status" value="1"/>
</dbReference>
<dbReference type="PANTHER" id="PTHR10937:SF0">
    <property type="entry name" value="GLUTAMINE--FRUCTOSE-6-PHOSPHATE TRANSAMINASE (ISOMERIZING)"/>
    <property type="match status" value="1"/>
</dbReference>
<dbReference type="Pfam" id="PF13522">
    <property type="entry name" value="GATase_6"/>
    <property type="match status" value="1"/>
</dbReference>
<dbReference type="Pfam" id="PF01380">
    <property type="entry name" value="SIS"/>
    <property type="match status" value="2"/>
</dbReference>
<dbReference type="SUPFAM" id="SSF56235">
    <property type="entry name" value="N-terminal nucleophile aminohydrolases (Ntn hydrolases)"/>
    <property type="match status" value="1"/>
</dbReference>
<dbReference type="SUPFAM" id="SSF53697">
    <property type="entry name" value="SIS domain"/>
    <property type="match status" value="1"/>
</dbReference>
<dbReference type="PROSITE" id="PS51278">
    <property type="entry name" value="GATASE_TYPE_2"/>
    <property type="match status" value="1"/>
</dbReference>
<dbReference type="PROSITE" id="PS51464">
    <property type="entry name" value="SIS"/>
    <property type="match status" value="2"/>
</dbReference>
<comment type="function">
    <text evidence="1">Catalyzes the first step in hexosamine metabolism, converting fructose-6P into glucosamine-6P using glutamine as a nitrogen source.</text>
</comment>
<comment type="catalytic activity">
    <reaction evidence="1">
        <text>D-fructose 6-phosphate + L-glutamine = D-glucosamine 6-phosphate + L-glutamate</text>
        <dbReference type="Rhea" id="RHEA:13237"/>
        <dbReference type="ChEBI" id="CHEBI:29985"/>
        <dbReference type="ChEBI" id="CHEBI:58359"/>
        <dbReference type="ChEBI" id="CHEBI:58725"/>
        <dbReference type="ChEBI" id="CHEBI:61527"/>
        <dbReference type="EC" id="2.6.1.16"/>
    </reaction>
</comment>
<comment type="subunit">
    <text evidence="1">Homodimer.</text>
</comment>
<comment type="subcellular location">
    <subcellularLocation>
        <location evidence="1">Cytoplasm</location>
    </subcellularLocation>
</comment>
<comment type="sequence caution" evidence="2">
    <conflict type="erroneous initiation">
        <sequence resource="EMBL-CDS" id="BAB12753"/>
    </conflict>
</comment>
<protein>
    <recommendedName>
        <fullName evidence="1">Glutamine--fructose-6-phosphate aminotransferase [isomerizing]</fullName>
        <ecNumber evidence="1">2.6.1.16</ecNumber>
    </recommendedName>
    <alternativeName>
        <fullName evidence="1">D-fructose-6-phosphate amidotransferase</fullName>
    </alternativeName>
    <alternativeName>
        <fullName evidence="1">GFAT</fullName>
    </alternativeName>
    <alternativeName>
        <fullName evidence="1">Glucosamine-6-phosphate synthase</fullName>
    </alternativeName>
    <alternativeName>
        <fullName evidence="1">Hexosephosphate aminotransferase</fullName>
    </alternativeName>
    <alternativeName>
        <fullName evidence="1">L-glutamine--D-fructose-6-phosphate amidotransferase</fullName>
    </alternativeName>
</protein>
<keyword id="KW-0032">Aminotransferase</keyword>
<keyword id="KW-0963">Cytoplasm</keyword>
<keyword id="KW-0315">Glutamine amidotransferase</keyword>
<keyword id="KW-1185">Reference proteome</keyword>
<keyword id="KW-0677">Repeat</keyword>
<keyword id="KW-0808">Transferase</keyword>
<reference key="1">
    <citation type="journal article" date="2000" name="Nature">
        <title>Genome sequence of the endocellular bacterial symbiont of aphids Buchnera sp. APS.</title>
        <authorList>
            <person name="Shigenobu S."/>
            <person name="Watanabe H."/>
            <person name="Hattori M."/>
            <person name="Sakaki Y."/>
            <person name="Ishikawa H."/>
        </authorList>
    </citation>
    <scope>NUCLEOTIDE SEQUENCE [LARGE SCALE GENOMIC DNA]</scope>
    <source>
        <strain>APS</strain>
    </source>
</reference>
<sequence>MCGIVAAVTQRNIANFLIDGIKKLEYRGYDSSGLAVIDNKNNIVRIRCVGKVNELIKKTNKKKILGSIGVAHTRWATHGKVSKENTHPHISSNIIVVHNGIIENNSTLRGFLKKQGYIFSSDTDTEVIAHLLHWEQNKKKDSLIKVIQNSIKKLDGNYSMVVIDQNNPSKLIAARSGSPLIIGLGTEENFIASDQIALLHVTKRFIYLEEGDIAIVARKEINIFNKNNSIIQREEVVSNIEYKSAKKGKYRYYMEKEIHEQPKSIRNTLKNRLTNSNKVHFSELGSKENNIFYNTEHIQIVACGTSYNAAMVSRYWFEELANIPCDVEIASEFSSRKLVVRKKSLLITLSQSGETADTLSALRYSKKLGYLGNLTICNMKSSSLVRESDFYILTKAGLEIGVASTKSFTTQLTVLLLLVAKIINSKKENNNTSKRIVQTLSILPVRIEEILKKKQLIQDMANTLANKKNMLFLGRGNQYPIAMEGALKLKEISYIHAEAYPSGELKHGPLALIDKNIPVIMIAPENSLLEKNKKNIKEICSRGGIVYVFSNQEFDYEENINTIKLPYVEELIAPIFYTIPLQLFAYYVALKKGRDIDQPRHLAKSVTVE</sequence>
<name>GLMS_BUCAI</name>
<gene>
    <name evidence="1" type="primary">glmS</name>
    <name type="ordered locus">BU026</name>
</gene>
<feature type="initiator methionine" description="Removed" evidence="1">
    <location>
        <position position="1"/>
    </location>
</feature>
<feature type="chain" id="PRO_0000135311" description="Glutamine--fructose-6-phosphate aminotransferase [isomerizing]">
    <location>
        <begin position="2"/>
        <end position="609"/>
    </location>
</feature>
<feature type="domain" description="Glutamine amidotransferase type-2" evidence="1">
    <location>
        <begin position="2"/>
        <end position="219"/>
    </location>
</feature>
<feature type="domain" description="SIS 1" evidence="1">
    <location>
        <begin position="288"/>
        <end position="428"/>
    </location>
</feature>
<feature type="domain" description="SIS 2" evidence="1">
    <location>
        <begin position="460"/>
        <end position="599"/>
    </location>
</feature>
<feature type="active site" description="Nucleophile; for GATase activity" evidence="1">
    <location>
        <position position="2"/>
    </location>
</feature>
<feature type="active site" description="For Fru-6P isomerization activity" evidence="1">
    <location>
        <position position="604"/>
    </location>
</feature>
<accession>P57138</accession>
<organism>
    <name type="scientific">Buchnera aphidicola subsp. Acyrthosiphon pisum (strain APS)</name>
    <name type="common">Acyrthosiphon pisum symbiotic bacterium</name>
    <dbReference type="NCBI Taxonomy" id="107806"/>
    <lineage>
        <taxon>Bacteria</taxon>
        <taxon>Pseudomonadati</taxon>
        <taxon>Pseudomonadota</taxon>
        <taxon>Gammaproteobacteria</taxon>
        <taxon>Enterobacterales</taxon>
        <taxon>Erwiniaceae</taxon>
        <taxon>Buchnera</taxon>
    </lineage>
</organism>
<evidence type="ECO:0000255" key="1">
    <source>
        <dbReference type="HAMAP-Rule" id="MF_00164"/>
    </source>
</evidence>
<evidence type="ECO:0000305" key="2"/>